<accession>P20053</accession>
<accession>D6W4H8</accession>
<reference key="1">
    <citation type="journal article" date="1989" name="Mol. Cell. Biol.">
        <title>PRP4 (RNA4) from Saccharomyces cerevisiae: its gene product is associated with the U4/U6 small nuclear ribonucleoprotein particle.</title>
        <authorList>
            <person name="Petersen-Bjoern S."/>
            <person name="Soltyk A."/>
            <person name="Beggs J.D."/>
            <person name="Friesen J.D."/>
        </authorList>
    </citation>
    <scope>NUCLEOTIDE SEQUENCE [GENOMIC DNA]</scope>
</reference>
<reference key="2">
    <citation type="journal article" date="1989" name="Mol. Cell. Biol.">
        <title>PRP4: a protein of the yeast U4/U6 small nuclear ribonucleoprotein particle.</title>
        <authorList>
            <person name="Banroques J."/>
            <person name="Abelson J.N."/>
        </authorList>
    </citation>
    <scope>NUCLEOTIDE SEQUENCE [GENOMIC DNA]</scope>
</reference>
<reference key="3">
    <citation type="journal article" date="1997" name="Nature">
        <title>The nucleotide sequence of Saccharomyces cerevisiae chromosome XVI.</title>
        <authorList>
            <person name="Bussey H."/>
            <person name="Storms R.K."/>
            <person name="Ahmed A."/>
            <person name="Albermann K."/>
            <person name="Allen E."/>
            <person name="Ansorge W."/>
            <person name="Araujo R."/>
            <person name="Aparicio A."/>
            <person name="Barrell B.G."/>
            <person name="Badcock K."/>
            <person name="Benes V."/>
            <person name="Botstein D."/>
            <person name="Bowman S."/>
            <person name="Brueckner M."/>
            <person name="Carpenter J."/>
            <person name="Cherry J.M."/>
            <person name="Chung E."/>
            <person name="Churcher C.M."/>
            <person name="Coster F."/>
            <person name="Davis K."/>
            <person name="Davis R.W."/>
            <person name="Dietrich F.S."/>
            <person name="Delius H."/>
            <person name="DiPaolo T."/>
            <person name="Dubois E."/>
            <person name="Duesterhoeft A."/>
            <person name="Duncan M."/>
            <person name="Floeth M."/>
            <person name="Fortin N."/>
            <person name="Friesen J.D."/>
            <person name="Fritz C."/>
            <person name="Goffeau A."/>
            <person name="Hall J."/>
            <person name="Hebling U."/>
            <person name="Heumann K."/>
            <person name="Hilbert H."/>
            <person name="Hillier L.W."/>
            <person name="Hunicke-Smith S."/>
            <person name="Hyman R.W."/>
            <person name="Johnston M."/>
            <person name="Kalman S."/>
            <person name="Kleine K."/>
            <person name="Komp C."/>
            <person name="Kurdi O."/>
            <person name="Lashkari D."/>
            <person name="Lew H."/>
            <person name="Lin A."/>
            <person name="Lin D."/>
            <person name="Louis E.J."/>
            <person name="Marathe R."/>
            <person name="Messenguy F."/>
            <person name="Mewes H.-W."/>
            <person name="Mirtipati S."/>
            <person name="Moestl D."/>
            <person name="Mueller-Auer S."/>
            <person name="Namath A."/>
            <person name="Nentwich U."/>
            <person name="Oefner P."/>
            <person name="Pearson D."/>
            <person name="Petel F.X."/>
            <person name="Pohl T.M."/>
            <person name="Purnelle B."/>
            <person name="Rajandream M.A."/>
            <person name="Rechmann S."/>
            <person name="Rieger M."/>
            <person name="Riles L."/>
            <person name="Roberts D."/>
            <person name="Schaefer M."/>
            <person name="Scharfe M."/>
            <person name="Scherens B."/>
            <person name="Schramm S."/>
            <person name="Schroeder M."/>
            <person name="Sdicu A.-M."/>
            <person name="Tettelin H."/>
            <person name="Urrestarazu L.A."/>
            <person name="Ushinsky S."/>
            <person name="Vierendeels F."/>
            <person name="Vissers S."/>
            <person name="Voss H."/>
            <person name="Walsh S.V."/>
            <person name="Wambutt R."/>
            <person name="Wang Y."/>
            <person name="Wedler E."/>
            <person name="Wedler H."/>
            <person name="Winnett E."/>
            <person name="Zhong W.-W."/>
            <person name="Zollner A."/>
            <person name="Vo D.H."/>
            <person name="Hani J."/>
        </authorList>
    </citation>
    <scope>NUCLEOTIDE SEQUENCE [LARGE SCALE GENOMIC DNA]</scope>
    <source>
        <strain>ATCC 204508 / S288c</strain>
    </source>
</reference>
<reference key="4">
    <citation type="journal article" date="2014" name="G3 (Bethesda)">
        <title>The reference genome sequence of Saccharomyces cerevisiae: Then and now.</title>
        <authorList>
            <person name="Engel S.R."/>
            <person name="Dietrich F.S."/>
            <person name="Fisk D.G."/>
            <person name="Binkley G."/>
            <person name="Balakrishnan R."/>
            <person name="Costanzo M.C."/>
            <person name="Dwight S.S."/>
            <person name="Hitz B.C."/>
            <person name="Karra K."/>
            <person name="Nash R.S."/>
            <person name="Weng S."/>
            <person name="Wong E.D."/>
            <person name="Lloyd P."/>
            <person name="Skrzypek M.S."/>
            <person name="Miyasato S.R."/>
            <person name="Simison M."/>
            <person name="Cherry J.M."/>
        </authorList>
    </citation>
    <scope>GENOME REANNOTATION</scope>
    <source>
        <strain>ATCC 204508 / S288c</strain>
    </source>
</reference>
<reference key="5">
    <citation type="journal article" date="1999" name="EMBO J.">
        <title>Identification by mass spectrometry and functional analysis of novel proteins of the yeast [U4/U6.U5] tri-snRNP.</title>
        <authorList>
            <person name="Gottschalk A."/>
            <person name="Neubauer G."/>
            <person name="Banroques J."/>
            <person name="Mann M."/>
            <person name="Luehrmann R."/>
            <person name="Fabrizio P."/>
        </authorList>
    </citation>
    <scope>SUBUNIT</scope>
    <scope>IDENTIFICATION IN THE U4/U5/U6 TRI-SNRNP COMPLEX</scope>
    <scope>IDENTIFICATION BY MASS SPECTROMETRY</scope>
</reference>
<reference key="6">
    <citation type="journal article" date="2003" name="Nature">
        <title>Global analysis of protein expression in yeast.</title>
        <authorList>
            <person name="Ghaemmaghami S."/>
            <person name="Huh W.-K."/>
            <person name="Bower K."/>
            <person name="Howson R.W."/>
            <person name="Belle A."/>
            <person name="Dephoure N."/>
            <person name="O'Shea E.K."/>
            <person name="Weissman J.S."/>
        </authorList>
    </citation>
    <scope>LEVEL OF PROTEIN EXPRESSION [LARGE SCALE ANALYSIS]</scope>
</reference>
<reference key="7">
    <citation type="journal article" date="2008" name="Mol. Cell. Proteomics">
        <title>A multidimensional chromatography technology for in-depth phosphoproteome analysis.</title>
        <authorList>
            <person name="Albuquerque C.P."/>
            <person name="Smolka M.B."/>
            <person name="Payne S.H."/>
            <person name="Bafna V."/>
            <person name="Eng J."/>
            <person name="Zhou H."/>
        </authorList>
    </citation>
    <scope>IDENTIFICATION BY MASS SPECTROMETRY [LARGE SCALE ANALYSIS]</scope>
</reference>
<dbReference type="EMBL" id="M26597">
    <property type="protein sequence ID" value="AAA79332.1"/>
    <property type="molecule type" value="Genomic_DNA"/>
</dbReference>
<dbReference type="EMBL" id="M28518">
    <property type="protein sequence ID" value="AAA79011.1"/>
    <property type="molecule type" value="Genomic_DNA"/>
</dbReference>
<dbReference type="EMBL" id="U25842">
    <property type="protein sequence ID" value="AAB68111.1"/>
    <property type="molecule type" value="Genomic_DNA"/>
</dbReference>
<dbReference type="EMBL" id="BK006949">
    <property type="protein sequence ID" value="DAA11594.1"/>
    <property type="molecule type" value="Genomic_DNA"/>
</dbReference>
<dbReference type="PIR" id="A32569">
    <property type="entry name" value="A32569"/>
</dbReference>
<dbReference type="RefSeq" id="NP_015504.1">
    <property type="nucleotide sequence ID" value="NM_001184275.1"/>
</dbReference>
<dbReference type="PDB" id="3JCM">
    <property type="method" value="EM"/>
    <property type="resolution" value="3.80 A"/>
    <property type="chains" value="B=1-465"/>
</dbReference>
<dbReference type="PDB" id="5GAN">
    <property type="method" value="EM"/>
    <property type="resolution" value="3.60 A"/>
    <property type="chains" value="H=1-465"/>
</dbReference>
<dbReference type="PDB" id="5GAP">
    <property type="method" value="EM"/>
    <property type="resolution" value="3.60 A"/>
    <property type="chains" value="H=1-465"/>
</dbReference>
<dbReference type="PDB" id="5NRL">
    <property type="method" value="EM"/>
    <property type="resolution" value="7.20 A"/>
    <property type="chains" value="H=1-465"/>
</dbReference>
<dbReference type="PDB" id="5ZWM">
    <property type="method" value="EM"/>
    <property type="resolution" value="3.40 A"/>
    <property type="chains" value="K=1-465"/>
</dbReference>
<dbReference type="PDB" id="5ZWO">
    <property type="method" value="EM"/>
    <property type="resolution" value="3.90 A"/>
    <property type="chains" value="K=1-465"/>
</dbReference>
<dbReference type="PDBsum" id="3JCM"/>
<dbReference type="PDBsum" id="5GAN"/>
<dbReference type="PDBsum" id="5GAP"/>
<dbReference type="PDBsum" id="5NRL"/>
<dbReference type="PDBsum" id="5ZWM"/>
<dbReference type="PDBsum" id="5ZWO"/>
<dbReference type="EMDB" id="EMD-3683"/>
<dbReference type="EMDB" id="EMD-6972"/>
<dbReference type="EMDB" id="EMD-6974"/>
<dbReference type="EMDB" id="EMD-8012"/>
<dbReference type="EMDB" id="EMD-8014"/>
<dbReference type="SMR" id="P20053"/>
<dbReference type="BioGRID" id="36350">
    <property type="interactions" value="575"/>
</dbReference>
<dbReference type="ComplexPortal" id="CPX-25">
    <property type="entry name" value="U4/U6.U5 tri-small nuclear ribonucleoprotein complex"/>
</dbReference>
<dbReference type="ComplexPortal" id="CPX-31">
    <property type="entry name" value="U4 small nuclear ribonucleoprotein complex"/>
</dbReference>
<dbReference type="ComplexPortal" id="CPX-32">
    <property type="entry name" value="U4/U6 small nuclear ribonucleoprotein complex"/>
</dbReference>
<dbReference type="DIP" id="DIP-2607N"/>
<dbReference type="FunCoup" id="P20053">
    <property type="interactions" value="517"/>
</dbReference>
<dbReference type="IntAct" id="P20053">
    <property type="interactions" value="52"/>
</dbReference>
<dbReference type="MINT" id="P20053"/>
<dbReference type="STRING" id="4932.YPR178W"/>
<dbReference type="iPTMnet" id="P20053"/>
<dbReference type="PaxDb" id="4932-YPR178W"/>
<dbReference type="PeptideAtlas" id="P20053"/>
<dbReference type="EnsemblFungi" id="YPR178W_mRNA">
    <property type="protein sequence ID" value="YPR178W"/>
    <property type="gene ID" value="YPR178W"/>
</dbReference>
<dbReference type="GeneID" id="856307"/>
<dbReference type="KEGG" id="sce:YPR178W"/>
<dbReference type="AGR" id="SGD:S000006382"/>
<dbReference type="SGD" id="S000006382">
    <property type="gene designation" value="PRP4"/>
</dbReference>
<dbReference type="VEuPathDB" id="FungiDB:YPR178W"/>
<dbReference type="eggNOG" id="KOG0272">
    <property type="taxonomic scope" value="Eukaryota"/>
</dbReference>
<dbReference type="GeneTree" id="ENSGT00940000156006"/>
<dbReference type="HOGENOM" id="CLU_000288_57_20_1"/>
<dbReference type="InParanoid" id="P20053"/>
<dbReference type="OMA" id="LNEPICY"/>
<dbReference type="OrthoDB" id="540662at2759"/>
<dbReference type="BioCyc" id="YEAST:G3O-34303-MONOMER"/>
<dbReference type="BioGRID-ORCS" id="856307">
    <property type="hits" value="1 hit in 10 CRISPR screens"/>
</dbReference>
<dbReference type="EvolutionaryTrace" id="P20053"/>
<dbReference type="PRO" id="PR:P20053"/>
<dbReference type="Proteomes" id="UP000002311">
    <property type="component" value="Chromosome XVI"/>
</dbReference>
<dbReference type="RNAct" id="P20053">
    <property type="molecule type" value="protein"/>
</dbReference>
<dbReference type="GO" id="GO:0005634">
    <property type="term" value="C:nucleus"/>
    <property type="evidence" value="ECO:0000303"/>
    <property type="project" value="ComplexPortal"/>
</dbReference>
<dbReference type="GO" id="GO:0005681">
    <property type="term" value="C:spliceosomal complex"/>
    <property type="evidence" value="ECO:0000303"/>
    <property type="project" value="ComplexPortal"/>
</dbReference>
<dbReference type="GO" id="GO:0005687">
    <property type="term" value="C:U4 snRNP"/>
    <property type="evidence" value="ECO:0000303"/>
    <property type="project" value="ComplexPortal"/>
</dbReference>
<dbReference type="GO" id="GO:0071001">
    <property type="term" value="C:U4/U6 snRNP"/>
    <property type="evidence" value="ECO:0000303"/>
    <property type="project" value="ComplexPortal"/>
</dbReference>
<dbReference type="GO" id="GO:0046540">
    <property type="term" value="C:U4/U6 x U5 tri-snRNP complex"/>
    <property type="evidence" value="ECO:0000314"/>
    <property type="project" value="SGD"/>
</dbReference>
<dbReference type="GO" id="GO:0030621">
    <property type="term" value="F:U4 snRNA binding"/>
    <property type="evidence" value="ECO:0000318"/>
    <property type="project" value="GO_Central"/>
</dbReference>
<dbReference type="GO" id="GO:0017070">
    <property type="term" value="F:U6 snRNA binding"/>
    <property type="evidence" value="ECO:0000318"/>
    <property type="project" value="GO_Central"/>
</dbReference>
<dbReference type="GO" id="GO:0000398">
    <property type="term" value="P:mRNA splicing, via spliceosome"/>
    <property type="evidence" value="ECO:0000318"/>
    <property type="project" value="GO_Central"/>
</dbReference>
<dbReference type="GO" id="GO:0034247">
    <property type="term" value="P:snoRNA splicing"/>
    <property type="evidence" value="ECO:0000315"/>
    <property type="project" value="SGD"/>
</dbReference>
<dbReference type="GO" id="GO:0000245">
    <property type="term" value="P:spliceosomal complex assembly"/>
    <property type="evidence" value="ECO:0000303"/>
    <property type="project" value="ComplexPortal"/>
</dbReference>
<dbReference type="GO" id="GO:0000393">
    <property type="term" value="P:spliceosomal conformational changes to generate catalytic conformation"/>
    <property type="evidence" value="ECO:0000315"/>
    <property type="project" value="SGD"/>
</dbReference>
<dbReference type="CDD" id="cd00200">
    <property type="entry name" value="WD40"/>
    <property type="match status" value="1"/>
</dbReference>
<dbReference type="Gene3D" id="2.130.10.10">
    <property type="entry name" value="YVTN repeat-like/Quinoprotein amine dehydrogenase"/>
    <property type="match status" value="2"/>
</dbReference>
<dbReference type="InterPro" id="IPR020472">
    <property type="entry name" value="G-protein_beta_WD-40_rep"/>
</dbReference>
<dbReference type="InterPro" id="IPR014906">
    <property type="entry name" value="PRP4-like"/>
</dbReference>
<dbReference type="InterPro" id="IPR015943">
    <property type="entry name" value="WD40/YVTN_repeat-like_dom_sf"/>
</dbReference>
<dbReference type="InterPro" id="IPR019775">
    <property type="entry name" value="WD40_repeat_CS"/>
</dbReference>
<dbReference type="InterPro" id="IPR036322">
    <property type="entry name" value="WD40_repeat_dom_sf"/>
</dbReference>
<dbReference type="InterPro" id="IPR001680">
    <property type="entry name" value="WD40_rpt"/>
</dbReference>
<dbReference type="PANTHER" id="PTHR19846:SF0">
    <property type="entry name" value="PRE-MRNA PROCESSING FACTOR 4"/>
    <property type="match status" value="1"/>
</dbReference>
<dbReference type="PANTHER" id="PTHR19846">
    <property type="entry name" value="WD40 REPEAT PROTEIN"/>
    <property type="match status" value="1"/>
</dbReference>
<dbReference type="Pfam" id="PF00400">
    <property type="entry name" value="WD40"/>
    <property type="match status" value="5"/>
</dbReference>
<dbReference type="PRINTS" id="PR00320">
    <property type="entry name" value="GPROTEINBRPT"/>
</dbReference>
<dbReference type="SMART" id="SM00500">
    <property type="entry name" value="SFM"/>
    <property type="match status" value="1"/>
</dbReference>
<dbReference type="SMART" id="SM00320">
    <property type="entry name" value="WD40"/>
    <property type="match status" value="7"/>
</dbReference>
<dbReference type="SUPFAM" id="SSF50978">
    <property type="entry name" value="WD40 repeat-like"/>
    <property type="match status" value="1"/>
</dbReference>
<dbReference type="PROSITE" id="PS00678">
    <property type="entry name" value="WD_REPEATS_1"/>
    <property type="match status" value="3"/>
</dbReference>
<dbReference type="PROSITE" id="PS50082">
    <property type="entry name" value="WD_REPEATS_2"/>
    <property type="match status" value="4"/>
</dbReference>
<dbReference type="PROSITE" id="PS50294">
    <property type="entry name" value="WD_REPEATS_REGION"/>
    <property type="match status" value="1"/>
</dbReference>
<organism>
    <name type="scientific">Saccharomyces cerevisiae (strain ATCC 204508 / S288c)</name>
    <name type="common">Baker's yeast</name>
    <dbReference type="NCBI Taxonomy" id="559292"/>
    <lineage>
        <taxon>Eukaryota</taxon>
        <taxon>Fungi</taxon>
        <taxon>Dikarya</taxon>
        <taxon>Ascomycota</taxon>
        <taxon>Saccharomycotina</taxon>
        <taxon>Saccharomycetes</taxon>
        <taxon>Saccharomycetales</taxon>
        <taxon>Saccharomycetaceae</taxon>
        <taxon>Saccharomyces</taxon>
    </lineage>
</organism>
<comment type="function">
    <text>Involved in RNA splicing. Is required for the association of U4/U6 snRNP with U5 snRNP in an early step of spliceosome assembly.</text>
</comment>
<comment type="subunit">
    <text evidence="1">Component of the U4/U6-U5 tri-snRNP complex composed of the U4, U6 and U5 snRNAs and at least PRP3, PRP4, PRP6, PRP8, PRP18, PRP31, PRP38, SNU13, SNU23, SNU66, SNU114, SPP381, SMB1, SMD1, SMD2, SMD3, SMX2, SMX3, LSM2, LSM3, LSM4, LSM5, LSM6, LSM7, LSM8, BRR2 and DIB1.</text>
</comment>
<comment type="interaction">
    <interactant intactId="EBI-219">
        <id>P20053</id>
    </interactant>
    <interactant intactId="EBI-141">
        <id>P53905</id>
        <label>LSM7</label>
    </interactant>
    <organismsDiffer>false</organismsDiffer>
    <experiments>3</experiments>
</comment>
<comment type="interaction">
    <interactant intactId="EBI-219">
        <id>P20053</id>
    </interactant>
    <interactant intactId="EBI-313">
        <id>P47093</id>
        <label>LSM8</label>
    </interactant>
    <organismsDiffer>false</organismsDiffer>
    <experiments>5</experiments>
</comment>
<comment type="interaction">
    <interactant intactId="EBI-219">
        <id>P20053</id>
    </interactant>
    <interactant intactId="EBI-421">
        <id>Q03338</id>
        <label>PRP3</label>
    </interactant>
    <organismsDiffer>false</organismsDiffer>
    <experiments>5</experiments>
</comment>
<comment type="subcellular location">
    <subcellularLocation>
        <location evidence="3">Nucleus</location>
    </subcellularLocation>
</comment>
<comment type="miscellaneous">
    <text evidence="2">Present with 1770 molecules/cell in log phase SD medium.</text>
</comment>
<feature type="chain" id="PRO_0000051152" description="U4/U6 small nuclear ribonucleoprotein PRP4">
    <location>
        <begin position="1"/>
        <end position="465"/>
    </location>
</feature>
<feature type="repeat" description="WD 1">
    <location>
        <begin position="173"/>
        <end position="212"/>
    </location>
</feature>
<feature type="repeat" description="WD 2">
    <location>
        <begin position="216"/>
        <end position="256"/>
    </location>
</feature>
<feature type="repeat" description="WD 3">
    <location>
        <begin position="263"/>
        <end position="302"/>
    </location>
</feature>
<feature type="repeat" description="WD 4">
    <location>
        <begin position="305"/>
        <end position="344"/>
    </location>
</feature>
<feature type="repeat" description="WD 5">
    <location>
        <begin position="347"/>
        <end position="386"/>
    </location>
</feature>
<feature type="repeat" description="WD 6">
    <location>
        <begin position="391"/>
        <end position="432"/>
    </location>
</feature>
<feature type="repeat" description="WD 7">
    <location>
        <begin position="435"/>
        <end position="464"/>
    </location>
</feature>
<keyword id="KW-0002">3D-structure</keyword>
<keyword id="KW-0507">mRNA processing</keyword>
<keyword id="KW-0508">mRNA splicing</keyword>
<keyword id="KW-0539">Nucleus</keyword>
<keyword id="KW-1185">Reference proteome</keyword>
<keyword id="KW-0677">Repeat</keyword>
<keyword id="KW-0747">Spliceosome</keyword>
<keyword id="KW-0853">WD repeat</keyword>
<gene>
    <name type="primary">PRP4</name>
    <name type="synonym">RNA4</name>
    <name type="ordered locus">YPR178W</name>
    <name type="ORF">P9705.6</name>
</gene>
<evidence type="ECO:0000269" key="1">
    <source>
    </source>
</evidence>
<evidence type="ECO:0000269" key="2">
    <source>
    </source>
</evidence>
<evidence type="ECO:0000305" key="3"/>
<proteinExistence type="evidence at protein level"/>
<protein>
    <recommendedName>
        <fullName>U4/U6 small nuclear ribonucleoprotein PRP4</fullName>
    </recommendedName>
    <alternativeName>
        <fullName>Pre-mRNA-processing protein 4</fullName>
    </alternativeName>
</protein>
<sequence length="465" mass="52442">MSKYIALENLPVDLQHKGATQNESTADILKQLPHERLQAVLEKIPEEDLEVRRLLSILKKPEVVENEDVQQRRIRLAEILMVDEIDLENINNMENINGEEVDEEDDEDFFTPATSELIFARRFLINYSLERSRKRLQKEMERHQKFNTRQELLSRRTELQRMANLELAGSQLVSTKPISAVSLSTDDMVVATGSWAGDLQVLNSQTLQPLTQKLDSHVGKIGAIDWHPDSNNQMISCAEDGLIKNFQYSNEEGGLRLLGDLVGHERRISDVKYHPSGKFIGSASHDMTWRLWDASTHQELLLQEGHDKGVFSLSFQCDGSLVCSGGMDSLSMLWDIRSGSKVMTLAGHSKPIYTVAWSPNGYQVATGGGDGIINVWDIRKRDEGQLNQILAHRNIVTQVRFSKEDGGKKLVSCGYDNLINVYSSDTWLKMGSLAGHTDKIISLDISNNSHFLVSGGWDRSIKLWN</sequence>
<name>PRP4_YEAST</name>